<protein>
    <recommendedName>
        <fullName>Uncharacterized protein MJ1079</fullName>
    </recommendedName>
</protein>
<comment type="subcellular location">
    <subcellularLocation>
        <location evidence="2">Cell membrane</location>
        <topology evidence="2">Multi-pass membrane protein</topology>
    </subcellularLocation>
</comment>
<organism>
    <name type="scientific">Methanocaldococcus jannaschii (strain ATCC 43067 / DSM 2661 / JAL-1 / JCM 10045 / NBRC 100440)</name>
    <name type="common">Methanococcus jannaschii</name>
    <dbReference type="NCBI Taxonomy" id="243232"/>
    <lineage>
        <taxon>Archaea</taxon>
        <taxon>Methanobacteriati</taxon>
        <taxon>Methanobacteriota</taxon>
        <taxon>Methanomada group</taxon>
        <taxon>Methanococci</taxon>
        <taxon>Methanococcales</taxon>
        <taxon>Methanocaldococcaceae</taxon>
        <taxon>Methanocaldococcus</taxon>
    </lineage>
</organism>
<reference key="1">
    <citation type="journal article" date="1996" name="Science">
        <title>Complete genome sequence of the methanogenic archaeon, Methanococcus jannaschii.</title>
        <authorList>
            <person name="Bult C.J."/>
            <person name="White O."/>
            <person name="Olsen G.J."/>
            <person name="Zhou L."/>
            <person name="Fleischmann R.D."/>
            <person name="Sutton G.G."/>
            <person name="Blake J.A."/>
            <person name="FitzGerald L.M."/>
            <person name="Clayton R.A."/>
            <person name="Gocayne J.D."/>
            <person name="Kerlavage A.R."/>
            <person name="Dougherty B.A."/>
            <person name="Tomb J.-F."/>
            <person name="Adams M.D."/>
            <person name="Reich C.I."/>
            <person name="Overbeek R."/>
            <person name="Kirkness E.F."/>
            <person name="Weinstock K.G."/>
            <person name="Merrick J.M."/>
            <person name="Glodek A."/>
            <person name="Scott J.L."/>
            <person name="Geoghagen N.S.M."/>
            <person name="Weidman J.F."/>
            <person name="Fuhrmann J.L."/>
            <person name="Nguyen D."/>
            <person name="Utterback T.R."/>
            <person name="Kelley J.M."/>
            <person name="Peterson J.D."/>
            <person name="Sadow P.W."/>
            <person name="Hanna M.C."/>
            <person name="Cotton M.D."/>
            <person name="Roberts K.M."/>
            <person name="Hurst M.A."/>
            <person name="Kaine B.P."/>
            <person name="Borodovsky M."/>
            <person name="Klenk H.-P."/>
            <person name="Fraser C.M."/>
            <person name="Smith H.O."/>
            <person name="Woese C.R."/>
            <person name="Venter J.C."/>
        </authorList>
    </citation>
    <scope>NUCLEOTIDE SEQUENCE [LARGE SCALE GENOMIC DNA]</scope>
    <source>
        <strain>ATCC 43067 / DSM 2661 / JAL-1 / JCM 10045 / NBRC 100440</strain>
    </source>
</reference>
<proteinExistence type="predicted"/>
<keyword id="KW-1003">Cell membrane</keyword>
<keyword id="KW-0472">Membrane</keyword>
<keyword id="KW-1185">Reference proteome</keyword>
<keyword id="KW-0812">Transmembrane</keyword>
<keyword id="KW-1133">Transmembrane helix</keyword>
<name>Y1079_METJA</name>
<evidence type="ECO:0000255" key="1"/>
<evidence type="ECO:0000305" key="2"/>
<dbReference type="EMBL" id="L77117">
    <property type="protein sequence ID" value="AAB99076.1"/>
    <property type="molecule type" value="Genomic_DNA"/>
</dbReference>
<dbReference type="PIR" id="F64434">
    <property type="entry name" value="F64434"/>
</dbReference>
<dbReference type="RefSeq" id="WP_010870591.1">
    <property type="nucleotide sequence ID" value="NC_000909.1"/>
</dbReference>
<dbReference type="STRING" id="243232.MJ_1079"/>
<dbReference type="PaxDb" id="243232-MJ_1079"/>
<dbReference type="EnsemblBacteria" id="AAB99076">
    <property type="protein sequence ID" value="AAB99076"/>
    <property type="gene ID" value="MJ_1079"/>
</dbReference>
<dbReference type="GeneID" id="1451975"/>
<dbReference type="KEGG" id="mja:MJ_1079"/>
<dbReference type="eggNOG" id="arCOG04469">
    <property type="taxonomic scope" value="Archaea"/>
</dbReference>
<dbReference type="HOGENOM" id="CLU_043916_1_0_2"/>
<dbReference type="InParanoid" id="Q58479"/>
<dbReference type="OrthoDB" id="53365at2157"/>
<dbReference type="PhylomeDB" id="Q58479"/>
<dbReference type="Proteomes" id="UP000000805">
    <property type="component" value="Chromosome"/>
</dbReference>
<dbReference type="GO" id="GO:0005886">
    <property type="term" value="C:plasma membrane"/>
    <property type="evidence" value="ECO:0007669"/>
    <property type="project" value="UniProtKB-SubCell"/>
</dbReference>
<dbReference type="InterPro" id="IPR002823">
    <property type="entry name" value="DUF112_TM"/>
</dbReference>
<dbReference type="PANTHER" id="PTHR42204">
    <property type="entry name" value="INTEGRAL MEMBRANE PROTEIN"/>
    <property type="match status" value="1"/>
</dbReference>
<dbReference type="PANTHER" id="PTHR42204:SF1">
    <property type="entry name" value="INTEGRAL MEMBRANE PROTEIN"/>
    <property type="match status" value="1"/>
</dbReference>
<dbReference type="Pfam" id="PF01970">
    <property type="entry name" value="TctA"/>
    <property type="match status" value="1"/>
</dbReference>
<accession>Q58479</accession>
<sequence>MLNLLYLILGIICGTITGLFPGIHPNNIVALSFLILPYFGLDNYIPFLIGLVITHYFINFIPSAFLGVPDDETAVSALPMHKLTLNGNGYEAIVLAGFGSYLGVVFSILISLFLMSILHFDVRAFYCSIKIFIPFILIAFILYQIFTAKSVWEVLVIFLSGIFGIAVLYCSEAFNITLTAIFTGMFGIPLLINNLKTYKIKSQMMAFPDFELKFLKSSFFASVAGFFRIFLPGISGAQLNYILSKILNERDLKNFIVSQGSIILSNEVFSLLAVIFIGVGRSGVARAIQLLNANININTAIFSILISSTIAIIILLNLSKYILLFIRKVNFKFLSLFFIIFCSLVVIIGSYNTYLIYHIIVYLTAIYIGLLAVKSNTNLSNMMNVLIFPTILYFLRG</sequence>
<gene>
    <name type="ordered locus">MJ1079</name>
</gene>
<feature type="chain" id="PRO_0000107160" description="Uncharacterized protein MJ1079">
    <location>
        <begin position="1"/>
        <end position="397"/>
    </location>
</feature>
<feature type="transmembrane region" description="Helical" evidence="1">
    <location>
        <begin position="2"/>
        <end position="24"/>
    </location>
</feature>
<feature type="transmembrane region" description="Helical" evidence="1">
    <location>
        <begin position="44"/>
        <end position="66"/>
    </location>
</feature>
<feature type="transmembrane region" description="Helical" evidence="1">
    <location>
        <begin position="92"/>
        <end position="114"/>
    </location>
</feature>
<feature type="transmembrane region" description="Helical" evidence="1">
    <location>
        <begin position="124"/>
        <end position="143"/>
    </location>
</feature>
<feature type="transmembrane region" description="Helical" evidence="1">
    <location>
        <begin position="150"/>
        <end position="169"/>
    </location>
</feature>
<feature type="transmembrane region" description="Helical" evidence="1">
    <location>
        <begin position="173"/>
        <end position="195"/>
    </location>
</feature>
<feature type="transmembrane region" description="Helical" evidence="1">
    <location>
        <begin position="255"/>
        <end position="277"/>
    </location>
</feature>
<feature type="transmembrane region" description="Helical" evidence="1">
    <location>
        <begin position="297"/>
        <end position="319"/>
    </location>
</feature>
<feature type="transmembrane region" description="Helical" evidence="1">
    <location>
        <begin position="331"/>
        <end position="350"/>
    </location>
</feature>
<feature type="transmembrane region" description="Helical" evidence="1">
    <location>
        <begin position="354"/>
        <end position="373"/>
    </location>
</feature>